<keyword id="KW-1185">Reference proteome</keyword>
<keyword id="KW-0677">Repeat</keyword>
<name>CS66_WHEAT</name>
<feature type="chain" id="PRO_0000100064" description="Cold shock protein CS66">
    <location>
        <begin position="1"/>
        <end position="469"/>
    </location>
</feature>
<feature type="repeat" description="1-1">
    <location>
        <begin position="9"/>
        <end position="31"/>
    </location>
</feature>
<feature type="repeat" description="2-1">
    <location>
        <begin position="49"/>
        <end position="62"/>
    </location>
</feature>
<feature type="repeat" description="1-2">
    <location>
        <begin position="72"/>
        <end position="94"/>
    </location>
</feature>
<feature type="repeat" description="2-2">
    <location>
        <begin position="95"/>
        <end position="108"/>
    </location>
</feature>
<feature type="repeat" description="2-3">
    <location>
        <begin position="115"/>
        <end position="128"/>
    </location>
</feature>
<feature type="repeat" description="2-4">
    <location>
        <begin position="135"/>
        <end position="148"/>
    </location>
</feature>
<feature type="repeat" description="2-5">
    <location>
        <begin position="149"/>
        <end position="162"/>
    </location>
</feature>
<feature type="repeat" description="1-3">
    <location>
        <begin position="170"/>
        <end position="192"/>
    </location>
</feature>
<feature type="repeat" description="2-6">
    <location>
        <begin position="193"/>
        <end position="206"/>
    </location>
</feature>
<feature type="repeat" description="2-7">
    <location>
        <begin position="213"/>
        <end position="226"/>
    </location>
</feature>
<feature type="repeat" description="1-4">
    <location>
        <begin position="234"/>
        <end position="256"/>
    </location>
</feature>
<feature type="repeat" description="2-8">
    <location>
        <begin position="257"/>
        <end position="270"/>
    </location>
</feature>
<feature type="repeat" description="2-9">
    <location>
        <begin position="277"/>
        <end position="290"/>
    </location>
</feature>
<feature type="repeat" description="1-5">
    <location>
        <begin position="298"/>
        <end position="320"/>
    </location>
</feature>
<feature type="repeat" description="2-10">
    <location>
        <begin position="321"/>
        <end position="334"/>
    </location>
</feature>
<feature type="repeat" description="2-11">
    <location>
        <begin position="341"/>
        <end position="354"/>
    </location>
</feature>
<feature type="repeat" description="1-6">
    <location>
        <begin position="362"/>
        <end position="384"/>
    </location>
</feature>
<feature type="repeat" description="2-12">
    <location>
        <begin position="385"/>
        <end position="398"/>
    </location>
</feature>
<feature type="repeat" description="2-13">
    <location>
        <begin position="405"/>
        <end position="418"/>
    </location>
</feature>
<feature type="repeat" description="2-14">
    <location>
        <begin position="428"/>
        <end position="441"/>
    </location>
</feature>
<feature type="repeat" description="1-7">
    <location>
        <begin position="452"/>
        <end position="469"/>
    </location>
</feature>
<feature type="region of interest" description="7 X 23 AA approximate repeats">
    <location>
        <begin position="9"/>
        <end position="390"/>
    </location>
</feature>
<feature type="region of interest" description="14 X 14 AA approximate repeats">
    <location>
        <begin position="49"/>
        <end position="441"/>
    </location>
</feature>
<feature type="region of interest" description="Disordered" evidence="1">
    <location>
        <begin position="87"/>
        <end position="112"/>
    </location>
</feature>
<feature type="region of interest" description="Disordered" evidence="1">
    <location>
        <begin position="203"/>
        <end position="469"/>
    </location>
</feature>
<feature type="compositionally biased region" description="Low complexity" evidence="1">
    <location>
        <begin position="93"/>
        <end position="112"/>
    </location>
</feature>
<feature type="compositionally biased region" description="Low complexity" evidence="1">
    <location>
        <begin position="203"/>
        <end position="214"/>
    </location>
</feature>
<feature type="compositionally biased region" description="Basic and acidic residues" evidence="1">
    <location>
        <begin position="233"/>
        <end position="254"/>
    </location>
</feature>
<feature type="compositionally biased region" description="Low complexity" evidence="1">
    <location>
        <begin position="255"/>
        <end position="274"/>
    </location>
</feature>
<feature type="compositionally biased region" description="Gly residues" evidence="1">
    <location>
        <begin position="288"/>
        <end position="301"/>
    </location>
</feature>
<feature type="compositionally biased region" description="Basic and acidic residues" evidence="1">
    <location>
        <begin position="302"/>
        <end position="312"/>
    </location>
</feature>
<feature type="compositionally biased region" description="Basic and acidic residues" evidence="1">
    <location>
        <begin position="361"/>
        <end position="382"/>
    </location>
</feature>
<feature type="compositionally biased region" description="Low complexity" evidence="1">
    <location>
        <begin position="383"/>
        <end position="402"/>
    </location>
</feature>
<feature type="compositionally biased region" description="Low complexity" evidence="1">
    <location>
        <begin position="412"/>
        <end position="429"/>
    </location>
</feature>
<feature type="compositionally biased region" description="Gly residues" evidence="1">
    <location>
        <begin position="439"/>
        <end position="450"/>
    </location>
</feature>
<feature type="compositionally biased region" description="Basic and acidic residues" evidence="1">
    <location>
        <begin position="451"/>
        <end position="469"/>
    </location>
</feature>
<evidence type="ECO:0000256" key="1">
    <source>
        <dbReference type="SAM" id="MobiDB-lite"/>
    </source>
</evidence>
<evidence type="ECO:0000305" key="2"/>
<sequence length="469" mass="46797">MDHQAHGAGEKKGIMEKIKEKLPGGHGDHKETAGAHGHAGTVTHGAPATGGAYGQEGHTGTTGTGLHGAHAGEKKGVMENIKDKLPGGHADHQQTGGTYGQQGHTGTATHGTLATGGTYGQQGHTGTAMHGTPATNGTYGEHGHTGTATGGSYGEQRHTGVTGTGTHDIGEKKSLMENIKEKLPGGHGDNQQTAGTYGQQGHFATGTHGTPATGGTYGEQGHAGVTGTGTHGTGEKKGLMENIKDKLPGGHGDHQQTGGTYGQQGHTGAATHGTPAGGGTYEQHGHTGMTGTGTHGTGGKKGVMENIKDKLPGGHSDNQQTGGAYEQQGHTGAATHGTPASGGTYEQHGHTGMTGTGTHGTGEKKAVMENIKDKLPGGHGDHQQTGGAYGQQGHTGTATHGTPAGGGTYEQHGNTGMTGTETHGTTATGGTHGQHGHTGTTGTGTHGTDGVGEKKSLMDKIKDKLPGQH</sequence>
<dbReference type="EMBL" id="L27516">
    <property type="protein sequence ID" value="AAA21819.1"/>
    <property type="molecule type" value="mRNA"/>
</dbReference>
<dbReference type="PIR" id="T06987">
    <property type="entry name" value="T06987"/>
</dbReference>
<dbReference type="STRING" id="4565.P46526"/>
<dbReference type="Proteomes" id="UP000019116">
    <property type="component" value="Unplaced"/>
</dbReference>
<dbReference type="ExpressionAtlas" id="P46526">
    <property type="expression patterns" value="baseline and differential"/>
</dbReference>
<dbReference type="GO" id="GO:0009631">
    <property type="term" value="P:cold acclimation"/>
    <property type="evidence" value="ECO:0000318"/>
    <property type="project" value="GO_Central"/>
</dbReference>
<dbReference type="GO" id="GO:0009737">
    <property type="term" value="P:response to abscisic acid"/>
    <property type="evidence" value="ECO:0000318"/>
    <property type="project" value="GO_Central"/>
</dbReference>
<dbReference type="GO" id="GO:0009414">
    <property type="term" value="P:response to water deprivation"/>
    <property type="evidence" value="ECO:0000318"/>
    <property type="project" value="GO_Central"/>
</dbReference>
<dbReference type="InterPro" id="IPR000167">
    <property type="entry name" value="Dehydrin"/>
</dbReference>
<dbReference type="InterPro" id="IPR030513">
    <property type="entry name" value="Dehydrin_CS"/>
</dbReference>
<dbReference type="PANTHER" id="PTHR33346:SF14">
    <property type="entry name" value="DEHYDRIN XERO 2"/>
    <property type="match status" value="1"/>
</dbReference>
<dbReference type="PANTHER" id="PTHR33346">
    <property type="entry name" value="DEHYDRIN XERO 2-RELATED"/>
    <property type="match status" value="1"/>
</dbReference>
<dbReference type="Pfam" id="PF00257">
    <property type="entry name" value="Dehydrin"/>
    <property type="match status" value="1"/>
</dbReference>
<dbReference type="PROSITE" id="PS00823">
    <property type="entry name" value="DEHYDRIN_2"/>
    <property type="match status" value="2"/>
</dbReference>
<accession>P46526</accession>
<gene>
    <name type="primary">CS66</name>
</gene>
<reference key="1">
    <citation type="journal article" date="1994" name="Plant Physiol.">
        <title>Nucleotide sequence of a new member of the freezing tolerance-associated protein family in wheat.</title>
        <authorList>
            <person name="Chauvin L.-P."/>
            <person name="Houde M."/>
            <person name="Sarhan F."/>
        </authorList>
    </citation>
    <scope>NUCLEOTIDE SEQUENCE [MRNA]</scope>
    <source>
        <strain>cv. Norstar</strain>
        <tissue>Shoot</tissue>
    </source>
</reference>
<protein>
    <recommendedName>
        <fullName>Cold shock protein CS66</fullName>
    </recommendedName>
</protein>
<organism>
    <name type="scientific">Triticum aestivum</name>
    <name type="common">Wheat</name>
    <dbReference type="NCBI Taxonomy" id="4565"/>
    <lineage>
        <taxon>Eukaryota</taxon>
        <taxon>Viridiplantae</taxon>
        <taxon>Streptophyta</taxon>
        <taxon>Embryophyta</taxon>
        <taxon>Tracheophyta</taxon>
        <taxon>Spermatophyta</taxon>
        <taxon>Magnoliopsida</taxon>
        <taxon>Liliopsida</taxon>
        <taxon>Poales</taxon>
        <taxon>Poaceae</taxon>
        <taxon>BOP clade</taxon>
        <taxon>Pooideae</taxon>
        <taxon>Triticodae</taxon>
        <taxon>Triticeae</taxon>
        <taxon>Triticinae</taxon>
        <taxon>Triticum</taxon>
    </lineage>
</organism>
<comment type="function">
    <text>May reduce intracellular freezing damage during winter by hydrogen-bonding to the lattice of the nascent ice crystals, thus modifying the structure and/or propagation of ice crystals.</text>
</comment>
<comment type="induction">
    <text>Specifically induced by cold temperatures.</text>
</comment>
<comment type="domain">
    <text>Contains 7 A-type repeats and 14 B-type repeats similar to those found in maize, rice and barley dehydrin and rab proteins.</text>
</comment>
<comment type="similarity">
    <text evidence="2">Belongs to the plant dehydrin family.</text>
</comment>
<proteinExistence type="evidence at transcript level"/>